<accession>Q704S8</accession>
<name>CACP_RAT</name>
<protein>
    <recommendedName>
        <fullName>Carnitine O-acetyltransferase</fullName>
        <shortName>Carnitine acetylase</shortName>
        <ecNumber evidence="2">2.3.1.137</ecNumber>
        <ecNumber evidence="2">2.3.1.7</ecNumber>
    </recommendedName>
    <alternativeName>
        <fullName>Carnitine acetyltransferase</fullName>
        <shortName>CAT</shortName>
        <shortName>CrAT</shortName>
    </alternativeName>
</protein>
<keyword id="KW-0007">Acetylation</keyword>
<keyword id="KW-0012">Acyltransferase</keyword>
<keyword id="KW-0256">Endoplasmic reticulum</keyword>
<keyword id="KW-0276">Fatty acid metabolism</keyword>
<keyword id="KW-0443">Lipid metabolism</keyword>
<keyword id="KW-0472">Membrane</keyword>
<keyword id="KW-0496">Mitochondrion</keyword>
<keyword id="KW-0999">Mitochondrion inner membrane</keyword>
<keyword id="KW-0576">Peroxisome</keyword>
<keyword id="KW-1185">Reference proteome</keyword>
<keyword id="KW-0808">Transferase</keyword>
<keyword id="KW-0813">Transport</keyword>
<organism>
    <name type="scientific">Rattus norvegicus</name>
    <name type="common">Rat</name>
    <dbReference type="NCBI Taxonomy" id="10116"/>
    <lineage>
        <taxon>Eukaryota</taxon>
        <taxon>Metazoa</taxon>
        <taxon>Chordata</taxon>
        <taxon>Craniata</taxon>
        <taxon>Vertebrata</taxon>
        <taxon>Euteleostomi</taxon>
        <taxon>Mammalia</taxon>
        <taxon>Eutheria</taxon>
        <taxon>Euarchontoglires</taxon>
        <taxon>Glires</taxon>
        <taxon>Rodentia</taxon>
        <taxon>Myomorpha</taxon>
        <taxon>Muroidea</taxon>
        <taxon>Muridae</taxon>
        <taxon>Murinae</taxon>
        <taxon>Rattus</taxon>
    </lineage>
</organism>
<dbReference type="EC" id="2.3.1.137" evidence="2"/>
<dbReference type="EC" id="2.3.1.7" evidence="2"/>
<dbReference type="EMBL" id="AJ620886">
    <property type="protein sequence ID" value="CAF06525.1"/>
    <property type="molecule type" value="mRNA"/>
</dbReference>
<dbReference type="EMBL" id="BC083616">
    <property type="protein sequence ID" value="AAH83616.1"/>
    <property type="molecule type" value="mRNA"/>
</dbReference>
<dbReference type="RefSeq" id="NP_001004085.1">
    <property type="nucleotide sequence ID" value="NM_001004085.2"/>
</dbReference>
<dbReference type="SMR" id="Q704S8"/>
<dbReference type="BioGRID" id="260070">
    <property type="interactions" value="1"/>
</dbReference>
<dbReference type="FunCoup" id="Q704S8">
    <property type="interactions" value="1532"/>
</dbReference>
<dbReference type="STRING" id="10116.ENSRNOP00000063089"/>
<dbReference type="GlyGen" id="Q704S8">
    <property type="glycosylation" value="1 site, 1 O-linked glycan (1 site)"/>
</dbReference>
<dbReference type="iPTMnet" id="Q704S8"/>
<dbReference type="PhosphoSitePlus" id="Q704S8"/>
<dbReference type="SwissPalm" id="Q704S8"/>
<dbReference type="PaxDb" id="10116-ENSRNOP00000063089"/>
<dbReference type="GeneID" id="311849"/>
<dbReference type="KEGG" id="rno:311849"/>
<dbReference type="UCSC" id="RGD:1303031">
    <property type="organism name" value="rat"/>
</dbReference>
<dbReference type="AGR" id="RGD:1303031"/>
<dbReference type="CTD" id="1384"/>
<dbReference type="RGD" id="1303031">
    <property type="gene designation" value="Crat"/>
</dbReference>
<dbReference type="VEuPathDB" id="HostDB:ENSRNOG00000018145"/>
<dbReference type="eggNOG" id="KOG3717">
    <property type="taxonomic scope" value="Eukaryota"/>
</dbReference>
<dbReference type="InParanoid" id="Q704S8"/>
<dbReference type="OrthoDB" id="240216at2759"/>
<dbReference type="PhylomeDB" id="Q704S8"/>
<dbReference type="BioCyc" id="MetaCyc:MONOMER-14440"/>
<dbReference type="BRENDA" id="2.3.1.7">
    <property type="organism ID" value="5301"/>
</dbReference>
<dbReference type="Reactome" id="R-RNO-389887">
    <property type="pathway name" value="Beta-oxidation of pristanoyl-CoA"/>
</dbReference>
<dbReference type="Reactome" id="R-RNO-9033241">
    <property type="pathway name" value="Peroxisomal protein import"/>
</dbReference>
<dbReference type="SABIO-RK" id="Q704S8"/>
<dbReference type="PRO" id="PR:Q704S8"/>
<dbReference type="Proteomes" id="UP000002494">
    <property type="component" value="Chromosome 3"/>
</dbReference>
<dbReference type="Bgee" id="ENSRNOG00000018145">
    <property type="expression patterns" value="Expressed in skeletal muscle tissue and 19 other cell types or tissues"/>
</dbReference>
<dbReference type="ExpressionAtlas" id="Q704S8">
    <property type="expression patterns" value="baseline and differential"/>
</dbReference>
<dbReference type="GO" id="GO:0005783">
    <property type="term" value="C:endoplasmic reticulum"/>
    <property type="evidence" value="ECO:0007669"/>
    <property type="project" value="UniProtKB-SubCell"/>
</dbReference>
<dbReference type="GO" id="GO:0005743">
    <property type="term" value="C:mitochondrial inner membrane"/>
    <property type="evidence" value="ECO:0007669"/>
    <property type="project" value="UniProtKB-SubCell"/>
</dbReference>
<dbReference type="GO" id="GO:0005739">
    <property type="term" value="C:mitochondrion"/>
    <property type="evidence" value="ECO:0000266"/>
    <property type="project" value="RGD"/>
</dbReference>
<dbReference type="GO" id="GO:0005777">
    <property type="term" value="C:peroxisome"/>
    <property type="evidence" value="ECO:0000266"/>
    <property type="project" value="RGD"/>
</dbReference>
<dbReference type="GO" id="GO:0003997">
    <property type="term" value="F:acyl-CoA oxidase activity"/>
    <property type="evidence" value="ECO:0000250"/>
    <property type="project" value="UniProtKB"/>
</dbReference>
<dbReference type="GO" id="GO:0004092">
    <property type="term" value="F:carnitine O-acetyltransferase activity"/>
    <property type="evidence" value="ECO:0000314"/>
    <property type="project" value="RGD"/>
</dbReference>
<dbReference type="GO" id="GO:0008458">
    <property type="term" value="F:carnitine O-octanoyltransferase activity"/>
    <property type="evidence" value="ECO:0007669"/>
    <property type="project" value="UniProtKB-EC"/>
</dbReference>
<dbReference type="GO" id="GO:0019254">
    <property type="term" value="P:carnitine metabolic process, CoA-linked"/>
    <property type="evidence" value="ECO:0000250"/>
    <property type="project" value="UniProtKB"/>
</dbReference>
<dbReference type="GO" id="GO:0033540">
    <property type="term" value="P:fatty acid beta-oxidation using acyl-CoA oxidase"/>
    <property type="evidence" value="ECO:0000250"/>
    <property type="project" value="UniProtKB"/>
</dbReference>
<dbReference type="GO" id="GO:0006631">
    <property type="term" value="P:fatty acid metabolic process"/>
    <property type="evidence" value="ECO:0000314"/>
    <property type="project" value="RGD"/>
</dbReference>
<dbReference type="GO" id="GO:0051791">
    <property type="term" value="P:medium-chain fatty acid metabolic process"/>
    <property type="evidence" value="ECO:0000250"/>
    <property type="project" value="UniProtKB"/>
</dbReference>
<dbReference type="GO" id="GO:0046459">
    <property type="term" value="P:short-chain fatty acid metabolic process"/>
    <property type="evidence" value="ECO:0000250"/>
    <property type="project" value="UniProtKB"/>
</dbReference>
<dbReference type="FunFam" id="3.30.559.10:FF:000001">
    <property type="entry name" value="Carnitine O-acetyltransferase"/>
    <property type="match status" value="1"/>
</dbReference>
<dbReference type="FunFam" id="3.30.559.70:FF:000002">
    <property type="entry name" value="Carnitine O-acetyltransferase"/>
    <property type="match status" value="1"/>
</dbReference>
<dbReference type="Gene3D" id="3.30.559.10">
    <property type="entry name" value="Chloramphenicol acetyltransferase-like domain"/>
    <property type="match status" value="1"/>
</dbReference>
<dbReference type="Gene3D" id="3.30.559.70">
    <property type="entry name" value="Choline/Carnitine o-acyltransferase, domain 2"/>
    <property type="match status" value="1"/>
</dbReference>
<dbReference type="InterPro" id="IPR000542">
    <property type="entry name" value="Carn_acyl_trans"/>
</dbReference>
<dbReference type="InterPro" id="IPR023213">
    <property type="entry name" value="CAT-like_dom_sf"/>
</dbReference>
<dbReference type="InterPro" id="IPR039551">
    <property type="entry name" value="Cho/carn_acyl_trans"/>
</dbReference>
<dbReference type="InterPro" id="IPR042231">
    <property type="entry name" value="Cho/carn_acyl_trans_2"/>
</dbReference>
<dbReference type="PANTHER" id="PTHR22589:SF50">
    <property type="entry name" value="CARNITINE O-ACETYLTRANSFERASE"/>
    <property type="match status" value="1"/>
</dbReference>
<dbReference type="PANTHER" id="PTHR22589">
    <property type="entry name" value="CARNITINE O-ACYLTRANSFERASE"/>
    <property type="match status" value="1"/>
</dbReference>
<dbReference type="Pfam" id="PF00755">
    <property type="entry name" value="Carn_acyltransf"/>
    <property type="match status" value="1"/>
</dbReference>
<dbReference type="SUPFAM" id="SSF52777">
    <property type="entry name" value="CoA-dependent acyltransferases"/>
    <property type="match status" value="2"/>
</dbReference>
<dbReference type="PROSITE" id="PS00439">
    <property type="entry name" value="ACYLTRANSF_C_1"/>
    <property type="match status" value="1"/>
</dbReference>
<dbReference type="PROSITE" id="PS00440">
    <property type="entry name" value="ACYLTRANSF_C_2"/>
    <property type="match status" value="1"/>
</dbReference>
<proteinExistence type="evidence at protein level"/>
<evidence type="ECO:0000250" key="1"/>
<evidence type="ECO:0000250" key="2">
    <source>
        <dbReference type="UniProtKB" id="P43155"/>
    </source>
</evidence>
<evidence type="ECO:0000250" key="3">
    <source>
        <dbReference type="UniProtKB" id="P47934"/>
    </source>
</evidence>
<evidence type="ECO:0000255" key="4"/>
<evidence type="ECO:0000269" key="5">
    <source>
    </source>
</evidence>
<evidence type="ECO:0000269" key="6">
    <source>
    </source>
</evidence>
<evidence type="ECO:0000305" key="7"/>
<evidence type="ECO:0000312" key="8">
    <source>
        <dbReference type="RGD" id="1303031"/>
    </source>
</evidence>
<feature type="chain" id="PRO_0000210174" description="Carnitine O-acetyltransferase">
    <location>
        <begin position="1"/>
        <end position="626"/>
    </location>
</feature>
<feature type="short sequence motif" description="Microbody targeting signal" evidence="4">
    <location>
        <begin position="624"/>
        <end position="626"/>
    </location>
</feature>
<feature type="active site" description="Proton acceptor">
    <location>
        <position position="343"/>
    </location>
</feature>
<feature type="binding site" evidence="3">
    <location>
        <position position="419"/>
    </location>
    <ligand>
        <name>CoA</name>
        <dbReference type="ChEBI" id="CHEBI:57287"/>
    </ligand>
</feature>
<feature type="binding site" evidence="3">
    <location>
        <begin position="423"/>
        <end position="430"/>
    </location>
    <ligand>
        <name>CoA</name>
        <dbReference type="ChEBI" id="CHEBI:57287"/>
    </ligand>
</feature>
<feature type="binding site" evidence="2">
    <location>
        <position position="452"/>
    </location>
    <ligand>
        <name>(R)-carnitine</name>
        <dbReference type="ChEBI" id="CHEBI:16347"/>
    </ligand>
</feature>
<feature type="binding site" evidence="2">
    <location>
        <position position="454"/>
    </location>
    <ligand>
        <name>(R)-carnitine</name>
        <dbReference type="ChEBI" id="CHEBI:16347"/>
    </ligand>
</feature>
<feature type="binding site" evidence="3">
    <location>
        <position position="456"/>
    </location>
    <ligand>
        <name>CoA</name>
        <dbReference type="ChEBI" id="CHEBI:57287"/>
    </ligand>
</feature>
<feature type="binding site" evidence="2">
    <location>
        <position position="465"/>
    </location>
    <ligand>
        <name>(R)-carnitine</name>
        <dbReference type="ChEBI" id="CHEBI:16347"/>
    </ligand>
</feature>
<feature type="binding site" evidence="3">
    <location>
        <position position="504"/>
    </location>
    <ligand>
        <name>CoA</name>
        <dbReference type="ChEBI" id="CHEBI:57287"/>
    </ligand>
</feature>
<feature type="binding site" evidence="3">
    <location>
        <position position="555"/>
    </location>
    <ligand>
        <name>CoA</name>
        <dbReference type="ChEBI" id="CHEBI:57287"/>
    </ligand>
</feature>
<feature type="modified residue" description="N6-succinyllysine" evidence="3">
    <location>
        <position position="93"/>
    </location>
</feature>
<feature type="modified residue" description="N6-acetyllysine; alternate" evidence="2">
    <location>
        <position position="261"/>
    </location>
</feature>
<feature type="modified residue" description="N6-succinyllysine; alternate" evidence="3">
    <location>
        <position position="261"/>
    </location>
</feature>
<feature type="modified residue" description="N6-acetyllysine" evidence="2">
    <location>
        <position position="268"/>
    </location>
</feature>
<feature type="mutagenesis site" description="Loss of enzyme activity." evidence="5">
    <original>H</original>
    <variation>A</variation>
    <location>
        <position position="343"/>
    </location>
</feature>
<feature type="mutagenesis site" description="Loss of enzyme activity." evidence="5">
    <original>E</original>
    <variation>A</variation>
    <location>
        <position position="347"/>
    </location>
</feature>
<feature type="mutagenesis site" description="Increases activity towards medium chain fatty acids." evidence="5">
    <original>M</original>
    <variation>A</variation>
    <location>
        <position position="564"/>
    </location>
</feature>
<feature type="mutagenesis site" description="Increases activity towards medium and long chain fatty acids." evidence="5">
    <original>M</original>
    <variation>G</variation>
    <location>
        <position position="564"/>
    </location>
</feature>
<gene>
    <name evidence="8" type="primary">Crat</name>
</gene>
<sequence>MLAFAARTVVKPLGLLKPSSLMKVSGRFKAHQDALPRLPVPPLQQSLDHYLKALQPIVSEEEWAHTKQLVDEFQTSGGVGERLQKGLERRAKKMENWLSEWWLKTAYLQFRQPVVIYSSPGVLLPKQDFMDLQGQLRFAAKLIEGVLDFKSMIDNETLPVEFLGGQPLCMNQYYQILSSCRVPGLKQDSVVNFLKSKKPPTHITVVHNYQFFELDVYHSDGTPLTSDQIFVQLEKIWNSSLQSNKEPVGILTSNHRNSWAKAYSSLIKDKVNRESVNSIQKSIFTVCLDKQVPRVSDDVYRSHVAGQMLHGGGSKFNSGNRWFDKTLQFIVAEDGSCGMVYEHAAAEGPPIVALVDHVMEYTKKPELVRSPMVPLPMPKKLRFNITPEIKNDIEKAKQNISIMIQDLDIMMLVFHHFGKDFPKSQKLSPDAFIQIALQLAYYRIYGQACATYESASLRMFHLGRTDTIRSASTDSLAFVKGMDDPKVPEQQRVELLRKAVQAHRAYTDRAIRGEAFDRHLLGLKLQAIEDLVSMPDIFMDTSYAIAMHFNLSTSQVPAKTDCVMSFGPVVPDGYGICYNPMEAHINFSVSAYNSCAETNAARMAHYLEKALLDMRTLLQNHPRAKL</sequence>
<comment type="function">
    <text evidence="2">Catalyzes the reversible transfer of acyl groups from carnitine to coenzyme A (CoA) and regulates the acyl-CoA/CoA ratio. Also plays a crucial role in the transport of fatty acids for beta-oxidation. Responsible for the synthesis of short- and branched-chain acylcarnitines. Active towards some branched-chain amino acid oxidation pathway (BCAAO) intermediates. Trans-2-enoyl-CoAs and 2-methylacyl-CoAs are poor substrates.</text>
</comment>
<comment type="catalytic activity">
    <reaction evidence="2">
        <text>(R)-carnitine + acetyl-CoA = O-acetyl-(R)-carnitine + CoA</text>
        <dbReference type="Rhea" id="RHEA:21136"/>
        <dbReference type="ChEBI" id="CHEBI:16347"/>
        <dbReference type="ChEBI" id="CHEBI:57287"/>
        <dbReference type="ChEBI" id="CHEBI:57288"/>
        <dbReference type="ChEBI" id="CHEBI:57589"/>
        <dbReference type="EC" id="2.3.1.7"/>
    </reaction>
    <physiologicalReaction direction="left-to-right" evidence="2">
        <dbReference type="Rhea" id="RHEA:21137"/>
    </physiologicalReaction>
</comment>
<comment type="catalytic activity">
    <reaction evidence="2">
        <text>propanoyl-CoA + (R)-carnitine = O-propanoyl-(R)-carnitine + CoA</text>
        <dbReference type="Rhea" id="RHEA:44976"/>
        <dbReference type="ChEBI" id="CHEBI:16347"/>
        <dbReference type="ChEBI" id="CHEBI:53210"/>
        <dbReference type="ChEBI" id="CHEBI:57287"/>
        <dbReference type="ChEBI" id="CHEBI:57392"/>
    </reaction>
    <physiologicalReaction direction="left-to-right" evidence="2">
        <dbReference type="Rhea" id="RHEA:44977"/>
    </physiologicalReaction>
</comment>
<comment type="catalytic activity">
    <reaction evidence="2">
        <text>butanoyl-CoA + (R)-carnitine = O-butanoyl-(R)-carnitine + CoA</text>
        <dbReference type="Rhea" id="RHEA:44980"/>
        <dbReference type="ChEBI" id="CHEBI:16347"/>
        <dbReference type="ChEBI" id="CHEBI:21949"/>
        <dbReference type="ChEBI" id="CHEBI:57287"/>
        <dbReference type="ChEBI" id="CHEBI:57371"/>
    </reaction>
    <physiologicalReaction direction="left-to-right" evidence="2">
        <dbReference type="Rhea" id="RHEA:44981"/>
    </physiologicalReaction>
</comment>
<comment type="catalytic activity">
    <reaction evidence="2">
        <text>hexanoyl-CoA + (R)-carnitine = O-hexanoyl-(R)-carnitine + CoA</text>
        <dbReference type="Rhea" id="RHEA:44972"/>
        <dbReference type="ChEBI" id="CHEBI:16347"/>
        <dbReference type="ChEBI" id="CHEBI:57287"/>
        <dbReference type="ChEBI" id="CHEBI:62620"/>
        <dbReference type="ChEBI" id="CHEBI:84834"/>
    </reaction>
    <physiologicalReaction direction="left-to-right" evidence="2">
        <dbReference type="Rhea" id="RHEA:44973"/>
    </physiologicalReaction>
</comment>
<comment type="catalytic activity">
    <reaction evidence="2">
        <text>octanoyl-CoA + (R)-carnitine = O-octanoyl-(R)-carnitine + CoA</text>
        <dbReference type="Rhea" id="RHEA:17177"/>
        <dbReference type="ChEBI" id="CHEBI:16347"/>
        <dbReference type="ChEBI" id="CHEBI:18102"/>
        <dbReference type="ChEBI" id="CHEBI:57287"/>
        <dbReference type="ChEBI" id="CHEBI:57386"/>
        <dbReference type="EC" id="2.3.1.137"/>
    </reaction>
    <physiologicalReaction direction="left-to-right" evidence="2">
        <dbReference type="Rhea" id="RHEA:17178"/>
    </physiologicalReaction>
</comment>
<comment type="catalytic activity">
    <reaction evidence="2">
        <text>decanoyl-CoA + (R)-carnitine = O-decanoyl-(R)-carnitine + CoA</text>
        <dbReference type="Rhea" id="RHEA:44828"/>
        <dbReference type="ChEBI" id="CHEBI:16347"/>
        <dbReference type="ChEBI" id="CHEBI:28717"/>
        <dbReference type="ChEBI" id="CHEBI:57287"/>
        <dbReference type="ChEBI" id="CHEBI:61430"/>
    </reaction>
    <physiologicalReaction direction="left-to-right" evidence="2">
        <dbReference type="Rhea" id="RHEA:44829"/>
    </physiologicalReaction>
</comment>
<comment type="catalytic activity">
    <reaction evidence="2">
        <text>3-methylbutanoyl-CoA + (R)-carnitine = O-3-methylbutanoyl-(R)-carnitine + CoA</text>
        <dbReference type="Rhea" id="RHEA:44984"/>
        <dbReference type="ChEBI" id="CHEBI:16347"/>
        <dbReference type="ChEBI" id="CHEBI:57287"/>
        <dbReference type="ChEBI" id="CHEBI:57345"/>
        <dbReference type="ChEBI" id="CHEBI:70819"/>
    </reaction>
    <physiologicalReaction direction="left-to-right" evidence="2">
        <dbReference type="Rhea" id="RHEA:44985"/>
    </physiologicalReaction>
</comment>
<comment type="catalytic activity">
    <reaction evidence="2">
        <text>2-methylpropanoyl-CoA + (R)-carnitine = O-isobutanoyl-(R)-carnitine + CoA</text>
        <dbReference type="Rhea" id="RHEA:44988"/>
        <dbReference type="ChEBI" id="CHEBI:16347"/>
        <dbReference type="ChEBI" id="CHEBI:57287"/>
        <dbReference type="ChEBI" id="CHEBI:57338"/>
        <dbReference type="ChEBI" id="CHEBI:84838"/>
    </reaction>
    <physiologicalReaction direction="left-to-right" evidence="2">
        <dbReference type="Rhea" id="RHEA:44989"/>
    </physiologicalReaction>
</comment>
<comment type="catalytic activity">
    <reaction evidence="2">
        <text>2-methylbutanoyl-CoA + (R)-carnitine = O-2-methylbutanoyl-(R)-carnitine + CoA</text>
        <dbReference type="Rhea" id="RHEA:44992"/>
        <dbReference type="ChEBI" id="CHEBI:16347"/>
        <dbReference type="ChEBI" id="CHEBI:57287"/>
        <dbReference type="ChEBI" id="CHEBI:57336"/>
        <dbReference type="ChEBI" id="CHEBI:84840"/>
    </reaction>
    <physiologicalReaction direction="left-to-right" evidence="2">
        <dbReference type="Rhea" id="RHEA:44993"/>
    </physiologicalReaction>
</comment>
<comment type="catalytic activity">
    <reaction evidence="2">
        <text>acetoacetyl-CoA + (R)-carnitine = O-3-oxobutanoyl-(R)-carnitine + CoA</text>
        <dbReference type="Rhea" id="RHEA:44996"/>
        <dbReference type="ChEBI" id="CHEBI:16347"/>
        <dbReference type="ChEBI" id="CHEBI:57286"/>
        <dbReference type="ChEBI" id="CHEBI:57287"/>
        <dbReference type="ChEBI" id="CHEBI:84841"/>
    </reaction>
    <physiologicalReaction direction="left-to-right" evidence="2">
        <dbReference type="Rhea" id="RHEA:44997"/>
    </physiologicalReaction>
</comment>
<comment type="catalytic activity">
    <reaction evidence="2">
        <text>3-hydroxybutanoyl-CoA + (R)-carnitine = O-3-hydroxybutanoyl-(R)-carnitine + CoA</text>
        <dbReference type="Rhea" id="RHEA:45000"/>
        <dbReference type="ChEBI" id="CHEBI:16347"/>
        <dbReference type="ChEBI" id="CHEBI:57287"/>
        <dbReference type="ChEBI" id="CHEBI:78611"/>
        <dbReference type="ChEBI" id="CHEBI:84842"/>
    </reaction>
    <physiologicalReaction direction="left-to-right" evidence="2">
        <dbReference type="Rhea" id="RHEA:45001"/>
    </physiologicalReaction>
</comment>
<comment type="catalytic activity">
    <reaction evidence="2">
        <text>4,8-dimethylnonanoyl-CoA + (R)-carnitine = O-4,8-dimethylnonanoyl-(R)-carnitine + CoA</text>
        <dbReference type="Rhea" id="RHEA:44860"/>
        <dbReference type="ChEBI" id="CHEBI:16347"/>
        <dbReference type="ChEBI" id="CHEBI:57287"/>
        <dbReference type="ChEBI" id="CHEBI:77061"/>
        <dbReference type="ChEBI" id="CHEBI:84654"/>
    </reaction>
    <physiologicalReaction direction="left-to-right" evidence="2">
        <dbReference type="Rhea" id="RHEA:44861"/>
    </physiologicalReaction>
</comment>
<comment type="catalytic activity">
    <reaction evidence="2">
        <text>2,6-dimethylheptanoyl-CoA + (R)-carnitine = O-2,6-dimethylheptanoyl-(R)-carnitine + CoA</text>
        <dbReference type="Rhea" id="RHEA:45004"/>
        <dbReference type="ChEBI" id="CHEBI:16347"/>
        <dbReference type="ChEBI" id="CHEBI:57287"/>
        <dbReference type="ChEBI" id="CHEBI:84843"/>
        <dbReference type="ChEBI" id="CHEBI:84847"/>
    </reaction>
    <physiologicalReaction direction="left-to-right" evidence="2">
        <dbReference type="Rhea" id="RHEA:45005"/>
    </physiologicalReaction>
</comment>
<comment type="subunit">
    <text evidence="1">Monomer.</text>
</comment>
<comment type="subcellular location">
    <subcellularLocation>
        <location evidence="7">Endoplasmic reticulum</location>
    </subcellularLocation>
    <subcellularLocation>
        <location evidence="7">Peroxisome</location>
    </subcellularLocation>
    <subcellularLocation>
        <location evidence="7">Mitochondrion inner membrane</location>
        <topology evidence="7">Peripheral membrane protein</topology>
        <orientation evidence="7">Matrix side</orientation>
    </subcellularLocation>
</comment>
<comment type="tissue specificity">
    <text evidence="6">Expressed in flagella of epididymal sperm.</text>
</comment>
<comment type="similarity">
    <text evidence="7">Belongs to the carnitine/choline acetyltransferase family.</text>
</comment>
<reference key="1">
    <citation type="journal article" date="2004" name="J. Biol. Chem.">
        <title>Redesign of carnitine acetyltransferase specificity by protein engineering.</title>
        <authorList>
            <person name="Cordente A.G."/>
            <person name="Lopez-Vinas E."/>
            <person name="Vazquez M.I."/>
            <person name="Swiegers J.H."/>
            <person name="Pretorius I.S."/>
            <person name="Gomez-Puertas P."/>
            <person name="Hegardt F.G."/>
            <person name="Asins G."/>
            <person name="Serra D."/>
        </authorList>
    </citation>
    <scope>NUCLEOTIDE SEQUENCE [MRNA]</scope>
    <scope>FUNCTION</scope>
    <scope>MUTAGENESIS OF HIS-343; GLU-347 AND MET-564</scope>
    <scope>3D-STRUCTURE MODELING</scope>
    <source>
        <strain>Sprague-Dawley</strain>
        <tissue>Testis</tissue>
    </source>
</reference>
<reference key="2">
    <citation type="journal article" date="2004" name="Genome Res.">
        <title>The status, quality, and expansion of the NIH full-length cDNA project: the Mammalian Gene Collection (MGC).</title>
        <authorList>
            <consortium name="The MGC Project Team"/>
        </authorList>
    </citation>
    <scope>NUCLEOTIDE SEQUENCE [LARGE SCALE MRNA]</scope>
    <source>
        <tissue>Testis</tissue>
    </source>
</reference>
<reference key="3">
    <citation type="journal article" date="2009" name="Reproduction">
        <title>Identification of novel immunodominant epididymal sperm proteins using combinatorial approach.</title>
        <authorList>
            <person name="Khan S.A."/>
            <person name="Suryawanshi A.R."/>
            <person name="Ranpura S.A."/>
            <person name="Jadhav S.V."/>
            <person name="Khole V.V."/>
        </authorList>
    </citation>
    <scope>IDENTIFICATION BY MASS SPECTROMETRY</scope>
    <scope>TISSUE SPECIFICITY</scope>
</reference>